<dbReference type="EMBL" id="AM774415">
    <property type="protein sequence ID" value="CAP14004.1"/>
    <property type="molecule type" value="Genomic_DNA"/>
</dbReference>
<dbReference type="RefSeq" id="WP_010903018.1">
    <property type="nucleotide sequence ID" value="NC_010364.1"/>
</dbReference>
<dbReference type="EnsemblBacteria" id="CAP14004">
    <property type="protein sequence ID" value="CAP14004"/>
    <property type="gene ID" value="OE_3004R"/>
</dbReference>
<dbReference type="KEGG" id="hsl:OE_3004R"/>
<dbReference type="HOGENOM" id="CLU_121764_0_0_2"/>
<dbReference type="PhylomeDB" id="B0R5I7"/>
<dbReference type="Proteomes" id="UP000001321">
    <property type="component" value="Chromosome"/>
</dbReference>
<dbReference type="HAMAP" id="MF_00498">
    <property type="entry name" value="UPF0179"/>
    <property type="match status" value="1"/>
</dbReference>
<dbReference type="InterPro" id="IPR005369">
    <property type="entry name" value="UPF0179"/>
</dbReference>
<dbReference type="PANTHER" id="PTHR40699">
    <property type="entry name" value="UPF0179 PROTEIN MJ1627"/>
    <property type="match status" value="1"/>
</dbReference>
<dbReference type="PANTHER" id="PTHR40699:SF1">
    <property type="entry name" value="UPF0179 PROTEIN MJ1627"/>
    <property type="match status" value="1"/>
</dbReference>
<dbReference type="Pfam" id="PF03684">
    <property type="entry name" value="UPF0179"/>
    <property type="match status" value="1"/>
</dbReference>
<dbReference type="PIRSF" id="PIRSF006595">
    <property type="entry name" value="UCP006595"/>
    <property type="match status" value="1"/>
</dbReference>
<protein>
    <recommendedName>
        <fullName evidence="1">UPF0179 protein OE_3004R</fullName>
    </recommendedName>
</protein>
<accession>B0R5I7</accession>
<gene>
    <name type="ordered locus">OE_3004R</name>
</gene>
<sequence length="148" mass="15824">MPITLLGPRLADPGTEFVYHGPADDCEGCPYRQQCLNLTEGVRYEVTDVREGGQVLDCAVHDEGAVAVDVEPTTIPATVPSKGAYAGSKGKLAGPCPHTECPSHEFCEPAGASFDTEYQIAEIDGEPPHDHCALDRDLTLVEFAPAER</sequence>
<organism>
    <name type="scientific">Halobacterium salinarum (strain ATCC 29341 / DSM 671 / R1)</name>
    <dbReference type="NCBI Taxonomy" id="478009"/>
    <lineage>
        <taxon>Archaea</taxon>
        <taxon>Methanobacteriati</taxon>
        <taxon>Methanobacteriota</taxon>
        <taxon>Stenosarchaea group</taxon>
        <taxon>Halobacteria</taxon>
        <taxon>Halobacteriales</taxon>
        <taxon>Halobacteriaceae</taxon>
        <taxon>Halobacterium</taxon>
        <taxon>Halobacterium salinarum NRC-34001</taxon>
    </lineage>
</organism>
<reference key="1">
    <citation type="journal article" date="2008" name="Genomics">
        <title>Evolution in the laboratory: the genome of Halobacterium salinarum strain R1 compared to that of strain NRC-1.</title>
        <authorList>
            <person name="Pfeiffer F."/>
            <person name="Schuster S.C."/>
            <person name="Broicher A."/>
            <person name="Falb M."/>
            <person name="Palm P."/>
            <person name="Rodewald K."/>
            <person name="Ruepp A."/>
            <person name="Soppa J."/>
            <person name="Tittor J."/>
            <person name="Oesterhelt D."/>
        </authorList>
    </citation>
    <scope>NUCLEOTIDE SEQUENCE [LARGE SCALE GENOMIC DNA]</scope>
    <source>
        <strain>ATCC 29341 / DSM 671 / R1</strain>
    </source>
</reference>
<proteinExistence type="inferred from homology"/>
<evidence type="ECO:0000255" key="1">
    <source>
        <dbReference type="HAMAP-Rule" id="MF_00498"/>
    </source>
</evidence>
<name>Y3004_HALS3</name>
<comment type="similarity">
    <text evidence="1">Belongs to the UPF0179 family.</text>
</comment>
<feature type="chain" id="PRO_1000126381" description="UPF0179 protein OE_3004R">
    <location>
        <begin position="1"/>
        <end position="148"/>
    </location>
</feature>